<dbReference type="EC" id="2.5.1.-" evidence="1"/>
<dbReference type="EMBL" id="CP000949">
    <property type="protein sequence ID" value="ACA71582.1"/>
    <property type="molecule type" value="Genomic_DNA"/>
</dbReference>
<dbReference type="SMR" id="B1J4E4"/>
<dbReference type="STRING" id="390235.PputW619_1077"/>
<dbReference type="KEGG" id="ppw:PputW619_1077"/>
<dbReference type="eggNOG" id="COG0500">
    <property type="taxonomic scope" value="Bacteria"/>
</dbReference>
<dbReference type="HOGENOM" id="CLU_052665_0_0_6"/>
<dbReference type="OrthoDB" id="9773188at2"/>
<dbReference type="GO" id="GO:0008168">
    <property type="term" value="F:methyltransferase activity"/>
    <property type="evidence" value="ECO:0007669"/>
    <property type="project" value="TreeGrafter"/>
</dbReference>
<dbReference type="GO" id="GO:0016765">
    <property type="term" value="F:transferase activity, transferring alkyl or aryl (other than methyl) groups"/>
    <property type="evidence" value="ECO:0007669"/>
    <property type="project" value="UniProtKB-UniRule"/>
</dbReference>
<dbReference type="GO" id="GO:0002098">
    <property type="term" value="P:tRNA wobble uridine modification"/>
    <property type="evidence" value="ECO:0007669"/>
    <property type="project" value="InterPro"/>
</dbReference>
<dbReference type="CDD" id="cd02440">
    <property type="entry name" value="AdoMet_MTases"/>
    <property type="match status" value="1"/>
</dbReference>
<dbReference type="Gene3D" id="3.40.50.150">
    <property type="entry name" value="Vaccinia Virus protein VP39"/>
    <property type="match status" value="1"/>
</dbReference>
<dbReference type="HAMAP" id="MF_01590">
    <property type="entry name" value="tRNA_carboxymethyltr_CmoB"/>
    <property type="match status" value="1"/>
</dbReference>
<dbReference type="InterPro" id="IPR010017">
    <property type="entry name" value="CmoB"/>
</dbReference>
<dbReference type="InterPro" id="IPR027555">
    <property type="entry name" value="Mo5U34_MeTrfas-like"/>
</dbReference>
<dbReference type="InterPro" id="IPR029063">
    <property type="entry name" value="SAM-dependent_MTases_sf"/>
</dbReference>
<dbReference type="NCBIfam" id="NF011650">
    <property type="entry name" value="PRK15068.1"/>
    <property type="match status" value="1"/>
</dbReference>
<dbReference type="NCBIfam" id="TIGR00452">
    <property type="entry name" value="tRNA 5-methoxyuridine(34)/uridine 5-oxyacetic acid(34) synthase CmoB"/>
    <property type="match status" value="1"/>
</dbReference>
<dbReference type="PANTHER" id="PTHR43464">
    <property type="entry name" value="METHYLTRANSFERASE"/>
    <property type="match status" value="1"/>
</dbReference>
<dbReference type="PANTHER" id="PTHR43464:SF95">
    <property type="entry name" value="TRNA U34 CARBOXYMETHYLTRANSFERASE"/>
    <property type="match status" value="1"/>
</dbReference>
<dbReference type="Pfam" id="PF08003">
    <property type="entry name" value="Methyltransf_9"/>
    <property type="match status" value="1"/>
</dbReference>
<dbReference type="SUPFAM" id="SSF53335">
    <property type="entry name" value="S-adenosyl-L-methionine-dependent methyltransferases"/>
    <property type="match status" value="1"/>
</dbReference>
<organism>
    <name type="scientific">Pseudomonas putida (strain W619)</name>
    <dbReference type="NCBI Taxonomy" id="390235"/>
    <lineage>
        <taxon>Bacteria</taxon>
        <taxon>Pseudomonadati</taxon>
        <taxon>Pseudomonadota</taxon>
        <taxon>Gammaproteobacteria</taxon>
        <taxon>Pseudomonadales</taxon>
        <taxon>Pseudomonadaceae</taxon>
        <taxon>Pseudomonas</taxon>
    </lineage>
</organism>
<gene>
    <name evidence="1" type="primary">cmoB</name>
    <name type="ordered locus">PputW619_1077</name>
</gene>
<sequence>MIDLSPLVRRLAGTPLACWSQGLQAQLQAKLEKGHGDLERWRGALDALPALLPSEIDLVDGLRLDCDCDDGTRAQMRQALMGLSPWRKGPFDLFGVHVDTEWRSDWKWSRVAPHLDLQGKRVLDVGCGNGYYQWRMLGAGADMVIGVDPNWLFFCQFQAVQRYLPDLPAWHLPFALEELPANLEGFDTVFSMGVFYHRRSPIEHLLALKDCLVKGGELVLETLVVEGDEQQVLVPEDRYAQMRNVWYLPSVPALERWLRRAGFSDVRCVDVSVTSVEEQRSTEWMRYQSLGDFLDPNDHSKTIEGLPAPRRATLLARK</sequence>
<evidence type="ECO:0000255" key="1">
    <source>
        <dbReference type="HAMAP-Rule" id="MF_01590"/>
    </source>
</evidence>
<keyword id="KW-0808">Transferase</keyword>
<keyword id="KW-0819">tRNA processing</keyword>
<reference key="1">
    <citation type="submission" date="2008-02" db="EMBL/GenBank/DDBJ databases">
        <title>Complete sequence of Pseudomonas putida W619.</title>
        <authorList>
            <person name="Copeland A."/>
            <person name="Lucas S."/>
            <person name="Lapidus A."/>
            <person name="Barry K."/>
            <person name="Detter J.C."/>
            <person name="Glavina del Rio T."/>
            <person name="Dalin E."/>
            <person name="Tice H."/>
            <person name="Pitluck S."/>
            <person name="Chain P."/>
            <person name="Malfatti S."/>
            <person name="Shin M."/>
            <person name="Vergez L."/>
            <person name="Schmutz J."/>
            <person name="Larimer F."/>
            <person name="Land M."/>
            <person name="Hauser L."/>
            <person name="Kyrpides N."/>
            <person name="Kim E."/>
            <person name="Taghavi S."/>
            <person name="Vangronsveld D."/>
            <person name="van der Lelie D."/>
            <person name="Richardson P."/>
        </authorList>
    </citation>
    <scope>NUCLEOTIDE SEQUENCE [LARGE SCALE GENOMIC DNA]</scope>
    <source>
        <strain>W619</strain>
    </source>
</reference>
<name>CMOB_PSEPW</name>
<comment type="function">
    <text evidence="1">Catalyzes carboxymethyl transfer from carboxy-S-adenosyl-L-methionine (Cx-SAM) to 5-hydroxyuridine (ho5U) to form 5-carboxymethoxyuridine (cmo5U) at position 34 in tRNAs.</text>
</comment>
<comment type="catalytic activity">
    <reaction evidence="1">
        <text>carboxy-S-adenosyl-L-methionine + 5-hydroxyuridine(34) in tRNA = 5-carboxymethoxyuridine(34) in tRNA + S-adenosyl-L-homocysteine + H(+)</text>
        <dbReference type="Rhea" id="RHEA:52848"/>
        <dbReference type="Rhea" id="RHEA-COMP:13381"/>
        <dbReference type="Rhea" id="RHEA-COMP:13383"/>
        <dbReference type="ChEBI" id="CHEBI:15378"/>
        <dbReference type="ChEBI" id="CHEBI:57856"/>
        <dbReference type="ChEBI" id="CHEBI:134278"/>
        <dbReference type="ChEBI" id="CHEBI:136877"/>
        <dbReference type="ChEBI" id="CHEBI:136879"/>
    </reaction>
</comment>
<comment type="subunit">
    <text evidence="1">Homotetramer.</text>
</comment>
<comment type="similarity">
    <text evidence="1">Belongs to the class I-like SAM-binding methyltransferase superfamily. CmoB family.</text>
</comment>
<protein>
    <recommendedName>
        <fullName evidence="1">tRNA U34 carboxymethyltransferase</fullName>
        <ecNumber evidence="1">2.5.1.-</ecNumber>
    </recommendedName>
</protein>
<accession>B1J4E4</accession>
<feature type="chain" id="PRO_1000201303" description="tRNA U34 carboxymethyltransferase">
    <location>
        <begin position="1"/>
        <end position="318"/>
    </location>
</feature>
<feature type="binding site" evidence="1">
    <location>
        <position position="88"/>
    </location>
    <ligand>
        <name>carboxy-S-adenosyl-L-methionine</name>
        <dbReference type="ChEBI" id="CHEBI:134278"/>
    </ligand>
</feature>
<feature type="binding site" evidence="1">
    <location>
        <position position="102"/>
    </location>
    <ligand>
        <name>carboxy-S-adenosyl-L-methionine</name>
        <dbReference type="ChEBI" id="CHEBI:134278"/>
    </ligand>
</feature>
<feature type="binding site" evidence="1">
    <location>
        <position position="107"/>
    </location>
    <ligand>
        <name>carboxy-S-adenosyl-L-methionine</name>
        <dbReference type="ChEBI" id="CHEBI:134278"/>
    </ligand>
</feature>
<feature type="binding site" evidence="1">
    <location>
        <position position="126"/>
    </location>
    <ligand>
        <name>carboxy-S-adenosyl-L-methionine</name>
        <dbReference type="ChEBI" id="CHEBI:134278"/>
    </ligand>
</feature>
<feature type="binding site" evidence="1">
    <location>
        <begin position="176"/>
        <end position="177"/>
    </location>
    <ligand>
        <name>carboxy-S-adenosyl-L-methionine</name>
        <dbReference type="ChEBI" id="CHEBI:134278"/>
    </ligand>
</feature>
<feature type="binding site" evidence="1">
    <location>
        <position position="192"/>
    </location>
    <ligand>
        <name>carboxy-S-adenosyl-L-methionine</name>
        <dbReference type="ChEBI" id="CHEBI:134278"/>
    </ligand>
</feature>
<feature type="binding site" evidence="1">
    <location>
        <position position="196"/>
    </location>
    <ligand>
        <name>carboxy-S-adenosyl-L-methionine</name>
        <dbReference type="ChEBI" id="CHEBI:134278"/>
    </ligand>
</feature>
<feature type="binding site" evidence="1">
    <location>
        <position position="311"/>
    </location>
    <ligand>
        <name>carboxy-S-adenosyl-L-methionine</name>
        <dbReference type="ChEBI" id="CHEBI:134278"/>
    </ligand>
</feature>
<proteinExistence type="inferred from homology"/>